<protein>
    <recommendedName>
        <fullName evidence="1">UDP-N-acetylglucosamine 1-carboxyvinyltransferase</fullName>
        <ecNumber evidence="1">2.5.1.7</ecNumber>
    </recommendedName>
    <alternativeName>
        <fullName evidence="1">Enoylpyruvate transferase</fullName>
    </alternativeName>
    <alternativeName>
        <fullName evidence="1">UDP-N-acetylglucosamine enolpyruvyl transferase</fullName>
        <shortName evidence="1">EPT</shortName>
    </alternativeName>
</protein>
<feature type="chain" id="PRO_1000094711" description="UDP-N-acetylglucosamine 1-carboxyvinyltransferase">
    <location>
        <begin position="1"/>
        <end position="421"/>
    </location>
</feature>
<feature type="active site" description="Proton donor" evidence="1">
    <location>
        <position position="117"/>
    </location>
</feature>
<feature type="binding site" evidence="1">
    <location>
        <begin position="22"/>
        <end position="23"/>
    </location>
    <ligand>
        <name>phosphoenolpyruvate</name>
        <dbReference type="ChEBI" id="CHEBI:58702"/>
    </ligand>
</feature>
<feature type="binding site" evidence="1">
    <location>
        <position position="93"/>
    </location>
    <ligand>
        <name>UDP-N-acetyl-alpha-D-glucosamine</name>
        <dbReference type="ChEBI" id="CHEBI:57705"/>
    </ligand>
</feature>
<feature type="binding site" evidence="1">
    <location>
        <begin position="122"/>
        <end position="126"/>
    </location>
    <ligand>
        <name>UDP-N-acetyl-alpha-D-glucosamine</name>
        <dbReference type="ChEBI" id="CHEBI:57705"/>
    </ligand>
</feature>
<feature type="binding site" evidence="1">
    <location>
        <position position="308"/>
    </location>
    <ligand>
        <name>UDP-N-acetyl-alpha-D-glucosamine</name>
        <dbReference type="ChEBI" id="CHEBI:57705"/>
    </ligand>
</feature>
<feature type="binding site" evidence="1">
    <location>
        <position position="330"/>
    </location>
    <ligand>
        <name>UDP-N-acetyl-alpha-D-glucosamine</name>
        <dbReference type="ChEBI" id="CHEBI:57705"/>
    </ligand>
</feature>
<feature type="modified residue" description="2-(S-cysteinyl)pyruvic acid O-phosphothioketal" evidence="1">
    <location>
        <position position="117"/>
    </location>
</feature>
<dbReference type="EC" id="2.5.1.7" evidence="1"/>
<dbReference type="EMBL" id="CP000949">
    <property type="protein sequence ID" value="ACA74731.1"/>
    <property type="molecule type" value="Genomic_DNA"/>
</dbReference>
<dbReference type="SMR" id="B1JBC3"/>
<dbReference type="STRING" id="390235.PputW619_4251"/>
<dbReference type="KEGG" id="ppw:PputW619_4251"/>
<dbReference type="eggNOG" id="COG0766">
    <property type="taxonomic scope" value="Bacteria"/>
</dbReference>
<dbReference type="HOGENOM" id="CLU_027387_0_0_6"/>
<dbReference type="OrthoDB" id="9803760at2"/>
<dbReference type="UniPathway" id="UPA00219"/>
<dbReference type="GO" id="GO:0005737">
    <property type="term" value="C:cytoplasm"/>
    <property type="evidence" value="ECO:0007669"/>
    <property type="project" value="UniProtKB-SubCell"/>
</dbReference>
<dbReference type="GO" id="GO:0008760">
    <property type="term" value="F:UDP-N-acetylglucosamine 1-carboxyvinyltransferase activity"/>
    <property type="evidence" value="ECO:0007669"/>
    <property type="project" value="UniProtKB-UniRule"/>
</dbReference>
<dbReference type="GO" id="GO:0051301">
    <property type="term" value="P:cell division"/>
    <property type="evidence" value="ECO:0007669"/>
    <property type="project" value="UniProtKB-KW"/>
</dbReference>
<dbReference type="GO" id="GO:0071555">
    <property type="term" value="P:cell wall organization"/>
    <property type="evidence" value="ECO:0007669"/>
    <property type="project" value="UniProtKB-KW"/>
</dbReference>
<dbReference type="GO" id="GO:0009252">
    <property type="term" value="P:peptidoglycan biosynthetic process"/>
    <property type="evidence" value="ECO:0007669"/>
    <property type="project" value="UniProtKB-UniRule"/>
</dbReference>
<dbReference type="GO" id="GO:0008360">
    <property type="term" value="P:regulation of cell shape"/>
    <property type="evidence" value="ECO:0007669"/>
    <property type="project" value="UniProtKB-KW"/>
</dbReference>
<dbReference type="GO" id="GO:0019277">
    <property type="term" value="P:UDP-N-acetylgalactosamine biosynthetic process"/>
    <property type="evidence" value="ECO:0007669"/>
    <property type="project" value="InterPro"/>
</dbReference>
<dbReference type="CDD" id="cd01555">
    <property type="entry name" value="UdpNAET"/>
    <property type="match status" value="1"/>
</dbReference>
<dbReference type="FunFam" id="3.65.10.10:FF:000002">
    <property type="entry name" value="UDP-N-acetylglucosamine 1-carboxyvinyltransferase"/>
    <property type="match status" value="1"/>
</dbReference>
<dbReference type="Gene3D" id="3.65.10.10">
    <property type="entry name" value="Enolpyruvate transferase domain"/>
    <property type="match status" value="2"/>
</dbReference>
<dbReference type="HAMAP" id="MF_00111">
    <property type="entry name" value="MurA"/>
    <property type="match status" value="1"/>
</dbReference>
<dbReference type="InterPro" id="IPR001986">
    <property type="entry name" value="Enolpyruvate_Tfrase_dom"/>
</dbReference>
<dbReference type="InterPro" id="IPR036968">
    <property type="entry name" value="Enolpyruvate_Tfrase_sf"/>
</dbReference>
<dbReference type="InterPro" id="IPR050068">
    <property type="entry name" value="MurA_subfamily"/>
</dbReference>
<dbReference type="InterPro" id="IPR013792">
    <property type="entry name" value="RNA3'P_cycl/enolpyr_Trfase_a/b"/>
</dbReference>
<dbReference type="InterPro" id="IPR005750">
    <property type="entry name" value="UDP_GlcNAc_COvinyl_MurA"/>
</dbReference>
<dbReference type="NCBIfam" id="TIGR01072">
    <property type="entry name" value="murA"/>
    <property type="match status" value="1"/>
</dbReference>
<dbReference type="NCBIfam" id="NF006873">
    <property type="entry name" value="PRK09369.1"/>
    <property type="match status" value="1"/>
</dbReference>
<dbReference type="PANTHER" id="PTHR43783">
    <property type="entry name" value="UDP-N-ACETYLGLUCOSAMINE 1-CARBOXYVINYLTRANSFERASE"/>
    <property type="match status" value="1"/>
</dbReference>
<dbReference type="PANTHER" id="PTHR43783:SF1">
    <property type="entry name" value="UDP-N-ACETYLGLUCOSAMINE 1-CARBOXYVINYLTRANSFERASE"/>
    <property type="match status" value="1"/>
</dbReference>
<dbReference type="Pfam" id="PF00275">
    <property type="entry name" value="EPSP_synthase"/>
    <property type="match status" value="1"/>
</dbReference>
<dbReference type="SUPFAM" id="SSF55205">
    <property type="entry name" value="EPT/RTPC-like"/>
    <property type="match status" value="1"/>
</dbReference>
<comment type="function">
    <text evidence="1">Cell wall formation. Adds enolpyruvyl to UDP-N-acetylglucosamine.</text>
</comment>
<comment type="catalytic activity">
    <reaction evidence="1">
        <text>phosphoenolpyruvate + UDP-N-acetyl-alpha-D-glucosamine = UDP-N-acetyl-3-O-(1-carboxyvinyl)-alpha-D-glucosamine + phosphate</text>
        <dbReference type="Rhea" id="RHEA:18681"/>
        <dbReference type="ChEBI" id="CHEBI:43474"/>
        <dbReference type="ChEBI" id="CHEBI:57705"/>
        <dbReference type="ChEBI" id="CHEBI:58702"/>
        <dbReference type="ChEBI" id="CHEBI:68483"/>
        <dbReference type="EC" id="2.5.1.7"/>
    </reaction>
</comment>
<comment type="pathway">
    <text evidence="1">Cell wall biogenesis; peptidoglycan biosynthesis.</text>
</comment>
<comment type="subcellular location">
    <subcellularLocation>
        <location evidence="1">Cytoplasm</location>
    </subcellularLocation>
</comment>
<comment type="similarity">
    <text evidence="1">Belongs to the EPSP synthase family. MurA subfamily.</text>
</comment>
<evidence type="ECO:0000255" key="1">
    <source>
        <dbReference type="HAMAP-Rule" id="MF_00111"/>
    </source>
</evidence>
<gene>
    <name evidence="1" type="primary">murA</name>
    <name type="ordered locus">PputW619_4251</name>
</gene>
<accession>B1JBC3</accession>
<proteinExistence type="inferred from homology"/>
<organism>
    <name type="scientific">Pseudomonas putida (strain W619)</name>
    <dbReference type="NCBI Taxonomy" id="390235"/>
    <lineage>
        <taxon>Bacteria</taxon>
        <taxon>Pseudomonadati</taxon>
        <taxon>Pseudomonadota</taxon>
        <taxon>Gammaproteobacteria</taxon>
        <taxon>Pseudomonadales</taxon>
        <taxon>Pseudomonadaceae</taxon>
        <taxon>Pseudomonas</taxon>
    </lineage>
</organism>
<reference key="1">
    <citation type="submission" date="2008-02" db="EMBL/GenBank/DDBJ databases">
        <title>Complete sequence of Pseudomonas putida W619.</title>
        <authorList>
            <person name="Copeland A."/>
            <person name="Lucas S."/>
            <person name="Lapidus A."/>
            <person name="Barry K."/>
            <person name="Detter J.C."/>
            <person name="Glavina del Rio T."/>
            <person name="Dalin E."/>
            <person name="Tice H."/>
            <person name="Pitluck S."/>
            <person name="Chain P."/>
            <person name="Malfatti S."/>
            <person name="Shin M."/>
            <person name="Vergez L."/>
            <person name="Schmutz J."/>
            <person name="Larimer F."/>
            <person name="Land M."/>
            <person name="Hauser L."/>
            <person name="Kyrpides N."/>
            <person name="Kim E."/>
            <person name="Taghavi S."/>
            <person name="Vangronsveld D."/>
            <person name="van der Lelie D."/>
            <person name="Richardson P."/>
        </authorList>
    </citation>
    <scope>NUCLEOTIDE SEQUENCE [LARGE SCALE GENOMIC DNA]</scope>
    <source>
        <strain>W619</strain>
    </source>
</reference>
<name>MURA_PSEPW</name>
<keyword id="KW-0131">Cell cycle</keyword>
<keyword id="KW-0132">Cell division</keyword>
<keyword id="KW-0133">Cell shape</keyword>
<keyword id="KW-0961">Cell wall biogenesis/degradation</keyword>
<keyword id="KW-0963">Cytoplasm</keyword>
<keyword id="KW-0573">Peptidoglycan synthesis</keyword>
<keyword id="KW-0670">Pyruvate</keyword>
<keyword id="KW-0808">Transferase</keyword>
<sequence>MDKLIITGGARLDGEIRISGAKNAALPILAATLLADGPVTVGNLPHLHDITTMIELFGRMGIEPVIDEKLAVEIDPRTIKTLVAPYELVKTMRASILVLGPMVARFGEAEVALPGGCAIGSRPVDLHIRGLEAMGAKIEVEGGYIKAKAPEGGLRGAHFFFDTVSVTGTENIMMAAALAKGRSVLQNAAREPEVVDLANFINAMGGNVQGAGTDTITIDGVERLHSASYRVMPDRIETGTYLVAAAVTGGRVKVKDTDPTILEAVLEKLKEAGADLTTGEDWIELNMHGKRPKAVNLRTAPYPAFPTDMQAQFISLNAIAEGTGAVIETIFENRFMHVYEMHRMGAHIQVEGNTAIVTGVPALKGAPVMATDLRASASLVLSALVAEGDTLIDRIYHIDRGYECIEEKLQMLGAKIRRVPG</sequence>